<keyword id="KW-0963">Cytoplasm</keyword>
<keyword id="KW-0460">Magnesium</keyword>
<keyword id="KW-0479">Metal-binding</keyword>
<keyword id="KW-0548">Nucleotidyltransferase</keyword>
<keyword id="KW-1185">Reference proteome</keyword>
<keyword id="KW-0694">RNA-binding</keyword>
<keyword id="KW-0808">Transferase</keyword>
<organism>
    <name type="scientific">Nocardioides sp. (strain ATCC BAA-499 / JS614)</name>
    <dbReference type="NCBI Taxonomy" id="196162"/>
    <lineage>
        <taxon>Bacteria</taxon>
        <taxon>Bacillati</taxon>
        <taxon>Actinomycetota</taxon>
        <taxon>Actinomycetes</taxon>
        <taxon>Propionibacteriales</taxon>
        <taxon>Nocardioidaceae</taxon>
        <taxon>Nocardioides</taxon>
    </lineage>
</organism>
<reference key="1">
    <citation type="submission" date="2006-12" db="EMBL/GenBank/DDBJ databases">
        <title>Complete sequence of chromosome 1 of Nocardioides sp. JS614.</title>
        <authorList>
            <person name="Copeland A."/>
            <person name="Lucas S."/>
            <person name="Lapidus A."/>
            <person name="Barry K."/>
            <person name="Detter J.C."/>
            <person name="Glavina del Rio T."/>
            <person name="Hammon N."/>
            <person name="Israni S."/>
            <person name="Dalin E."/>
            <person name="Tice H."/>
            <person name="Pitluck S."/>
            <person name="Thompson L.S."/>
            <person name="Brettin T."/>
            <person name="Bruce D."/>
            <person name="Han C."/>
            <person name="Tapia R."/>
            <person name="Schmutz J."/>
            <person name="Larimer F."/>
            <person name="Land M."/>
            <person name="Hauser L."/>
            <person name="Kyrpides N."/>
            <person name="Kim E."/>
            <person name="Mattes T."/>
            <person name="Gossett J."/>
            <person name="Richardson P."/>
        </authorList>
    </citation>
    <scope>NUCLEOTIDE SEQUENCE [LARGE SCALE GENOMIC DNA]</scope>
    <source>
        <strain>ATCC BAA-499 / JS614</strain>
    </source>
</reference>
<comment type="function">
    <text evidence="1">Involved in mRNA degradation. Catalyzes the phosphorolysis of single-stranded polyribonucleotides processively in the 3'- to 5'-direction.</text>
</comment>
<comment type="catalytic activity">
    <reaction evidence="1">
        <text>RNA(n+1) + phosphate = RNA(n) + a ribonucleoside 5'-diphosphate</text>
        <dbReference type="Rhea" id="RHEA:22096"/>
        <dbReference type="Rhea" id="RHEA-COMP:14527"/>
        <dbReference type="Rhea" id="RHEA-COMP:17342"/>
        <dbReference type="ChEBI" id="CHEBI:43474"/>
        <dbReference type="ChEBI" id="CHEBI:57930"/>
        <dbReference type="ChEBI" id="CHEBI:140395"/>
        <dbReference type="EC" id="2.7.7.8"/>
    </reaction>
</comment>
<comment type="cofactor">
    <cofactor evidence="1">
        <name>Mg(2+)</name>
        <dbReference type="ChEBI" id="CHEBI:18420"/>
    </cofactor>
</comment>
<comment type="subcellular location">
    <subcellularLocation>
        <location evidence="1">Cytoplasm</location>
    </subcellularLocation>
</comment>
<comment type="similarity">
    <text evidence="1">Belongs to the polyribonucleotide nucleotidyltransferase family.</text>
</comment>
<protein>
    <recommendedName>
        <fullName evidence="1">Polyribonucleotide nucleotidyltransferase</fullName>
        <ecNumber evidence="1">2.7.7.8</ecNumber>
    </recommendedName>
    <alternativeName>
        <fullName evidence="1">Polynucleotide phosphorylase</fullName>
        <shortName evidence="1">PNPase</shortName>
    </alternativeName>
</protein>
<gene>
    <name evidence="1" type="primary">pnp</name>
    <name type="ordered locus">Noca_3177</name>
</gene>
<dbReference type="EC" id="2.7.7.8" evidence="1"/>
<dbReference type="EMBL" id="CP000509">
    <property type="protein sequence ID" value="ABL82679.1"/>
    <property type="molecule type" value="Genomic_DNA"/>
</dbReference>
<dbReference type="SMR" id="A1SLJ4"/>
<dbReference type="STRING" id="196162.Noca_3177"/>
<dbReference type="KEGG" id="nca:Noca_3177"/>
<dbReference type="eggNOG" id="COG1185">
    <property type="taxonomic scope" value="Bacteria"/>
</dbReference>
<dbReference type="HOGENOM" id="CLU_004217_2_2_11"/>
<dbReference type="OrthoDB" id="9804305at2"/>
<dbReference type="Proteomes" id="UP000000640">
    <property type="component" value="Chromosome"/>
</dbReference>
<dbReference type="GO" id="GO:0005829">
    <property type="term" value="C:cytosol"/>
    <property type="evidence" value="ECO:0007669"/>
    <property type="project" value="TreeGrafter"/>
</dbReference>
<dbReference type="GO" id="GO:0000175">
    <property type="term" value="F:3'-5'-RNA exonuclease activity"/>
    <property type="evidence" value="ECO:0007669"/>
    <property type="project" value="TreeGrafter"/>
</dbReference>
<dbReference type="GO" id="GO:0000287">
    <property type="term" value="F:magnesium ion binding"/>
    <property type="evidence" value="ECO:0007669"/>
    <property type="project" value="UniProtKB-UniRule"/>
</dbReference>
<dbReference type="GO" id="GO:0004654">
    <property type="term" value="F:polyribonucleotide nucleotidyltransferase activity"/>
    <property type="evidence" value="ECO:0007669"/>
    <property type="project" value="UniProtKB-UniRule"/>
</dbReference>
<dbReference type="GO" id="GO:0003723">
    <property type="term" value="F:RNA binding"/>
    <property type="evidence" value="ECO:0007669"/>
    <property type="project" value="UniProtKB-UniRule"/>
</dbReference>
<dbReference type="GO" id="GO:0006402">
    <property type="term" value="P:mRNA catabolic process"/>
    <property type="evidence" value="ECO:0007669"/>
    <property type="project" value="UniProtKB-UniRule"/>
</dbReference>
<dbReference type="GO" id="GO:0006396">
    <property type="term" value="P:RNA processing"/>
    <property type="evidence" value="ECO:0007669"/>
    <property type="project" value="InterPro"/>
</dbReference>
<dbReference type="CDD" id="cd02393">
    <property type="entry name" value="KH-I_PNPase"/>
    <property type="match status" value="1"/>
</dbReference>
<dbReference type="CDD" id="cd11364">
    <property type="entry name" value="RNase_PH_PNPase_2"/>
    <property type="match status" value="1"/>
</dbReference>
<dbReference type="CDD" id="cd04472">
    <property type="entry name" value="S1_PNPase"/>
    <property type="match status" value="1"/>
</dbReference>
<dbReference type="FunFam" id="2.40.50.140:FF:000069">
    <property type="entry name" value="Polyribonucleotide nucleotidyltransferase"/>
    <property type="match status" value="1"/>
</dbReference>
<dbReference type="FunFam" id="3.30.1370.10:FF:000001">
    <property type="entry name" value="Polyribonucleotide nucleotidyltransferase"/>
    <property type="match status" value="1"/>
</dbReference>
<dbReference type="FunFam" id="3.30.230.70:FF:000001">
    <property type="entry name" value="Polyribonucleotide nucleotidyltransferase"/>
    <property type="match status" value="1"/>
</dbReference>
<dbReference type="FunFam" id="3.30.230.70:FF:000002">
    <property type="entry name" value="Polyribonucleotide nucleotidyltransferase"/>
    <property type="match status" value="1"/>
</dbReference>
<dbReference type="Gene3D" id="3.30.230.70">
    <property type="entry name" value="GHMP Kinase, N-terminal domain"/>
    <property type="match status" value="2"/>
</dbReference>
<dbReference type="Gene3D" id="3.30.1370.10">
    <property type="entry name" value="K Homology domain, type 1"/>
    <property type="match status" value="1"/>
</dbReference>
<dbReference type="Gene3D" id="2.40.50.140">
    <property type="entry name" value="Nucleic acid-binding proteins"/>
    <property type="match status" value="1"/>
</dbReference>
<dbReference type="HAMAP" id="MF_01595">
    <property type="entry name" value="PNPase"/>
    <property type="match status" value="1"/>
</dbReference>
<dbReference type="InterPro" id="IPR001247">
    <property type="entry name" value="ExoRNase_PH_dom1"/>
</dbReference>
<dbReference type="InterPro" id="IPR015847">
    <property type="entry name" value="ExoRNase_PH_dom2"/>
</dbReference>
<dbReference type="InterPro" id="IPR036345">
    <property type="entry name" value="ExoRNase_PH_dom2_sf"/>
</dbReference>
<dbReference type="InterPro" id="IPR014069">
    <property type="entry name" value="GPSI/PNP"/>
</dbReference>
<dbReference type="InterPro" id="IPR004087">
    <property type="entry name" value="KH_dom"/>
</dbReference>
<dbReference type="InterPro" id="IPR004088">
    <property type="entry name" value="KH_dom_type_1"/>
</dbReference>
<dbReference type="InterPro" id="IPR036612">
    <property type="entry name" value="KH_dom_type_1_sf"/>
</dbReference>
<dbReference type="InterPro" id="IPR012340">
    <property type="entry name" value="NA-bd_OB-fold"/>
</dbReference>
<dbReference type="InterPro" id="IPR012162">
    <property type="entry name" value="PNPase"/>
</dbReference>
<dbReference type="InterPro" id="IPR027408">
    <property type="entry name" value="PNPase/RNase_PH_dom_sf"/>
</dbReference>
<dbReference type="InterPro" id="IPR015848">
    <property type="entry name" value="PNPase_PH_RNA-bd_bac/org-type"/>
</dbReference>
<dbReference type="InterPro" id="IPR036456">
    <property type="entry name" value="PNPase_PH_RNA-bd_sf"/>
</dbReference>
<dbReference type="InterPro" id="IPR020568">
    <property type="entry name" value="Ribosomal_Su5_D2-typ_SF"/>
</dbReference>
<dbReference type="InterPro" id="IPR003029">
    <property type="entry name" value="S1_domain"/>
</dbReference>
<dbReference type="NCBIfam" id="TIGR03591">
    <property type="entry name" value="polynuc_phos"/>
    <property type="match status" value="1"/>
</dbReference>
<dbReference type="NCBIfam" id="TIGR02696">
    <property type="entry name" value="pppGpp_PNP"/>
    <property type="match status" value="1"/>
</dbReference>
<dbReference type="NCBIfam" id="NF008805">
    <property type="entry name" value="PRK11824.1"/>
    <property type="match status" value="1"/>
</dbReference>
<dbReference type="PANTHER" id="PTHR11252">
    <property type="entry name" value="POLYRIBONUCLEOTIDE NUCLEOTIDYLTRANSFERASE"/>
    <property type="match status" value="1"/>
</dbReference>
<dbReference type="PANTHER" id="PTHR11252:SF0">
    <property type="entry name" value="POLYRIBONUCLEOTIDE NUCLEOTIDYLTRANSFERASE 1, MITOCHONDRIAL"/>
    <property type="match status" value="1"/>
</dbReference>
<dbReference type="Pfam" id="PF00013">
    <property type="entry name" value="KH_1"/>
    <property type="match status" value="1"/>
</dbReference>
<dbReference type="Pfam" id="PF03726">
    <property type="entry name" value="PNPase"/>
    <property type="match status" value="1"/>
</dbReference>
<dbReference type="Pfam" id="PF01138">
    <property type="entry name" value="RNase_PH"/>
    <property type="match status" value="2"/>
</dbReference>
<dbReference type="Pfam" id="PF03725">
    <property type="entry name" value="RNase_PH_C"/>
    <property type="match status" value="1"/>
</dbReference>
<dbReference type="Pfam" id="PF00575">
    <property type="entry name" value="S1"/>
    <property type="match status" value="1"/>
</dbReference>
<dbReference type="PIRSF" id="PIRSF005499">
    <property type="entry name" value="PNPase"/>
    <property type="match status" value="1"/>
</dbReference>
<dbReference type="SMART" id="SM00322">
    <property type="entry name" value="KH"/>
    <property type="match status" value="1"/>
</dbReference>
<dbReference type="SMART" id="SM00316">
    <property type="entry name" value="S1"/>
    <property type="match status" value="1"/>
</dbReference>
<dbReference type="SUPFAM" id="SSF54791">
    <property type="entry name" value="Eukaryotic type KH-domain (KH-domain type I)"/>
    <property type="match status" value="1"/>
</dbReference>
<dbReference type="SUPFAM" id="SSF50249">
    <property type="entry name" value="Nucleic acid-binding proteins"/>
    <property type="match status" value="1"/>
</dbReference>
<dbReference type="SUPFAM" id="SSF46915">
    <property type="entry name" value="Polynucleotide phosphorylase/guanosine pentaphosphate synthase (PNPase/GPSI), domain 3"/>
    <property type="match status" value="1"/>
</dbReference>
<dbReference type="SUPFAM" id="SSF55666">
    <property type="entry name" value="Ribonuclease PH domain 2-like"/>
    <property type="match status" value="2"/>
</dbReference>
<dbReference type="SUPFAM" id="SSF54211">
    <property type="entry name" value="Ribosomal protein S5 domain 2-like"/>
    <property type="match status" value="2"/>
</dbReference>
<dbReference type="PROSITE" id="PS50084">
    <property type="entry name" value="KH_TYPE_1"/>
    <property type="match status" value="1"/>
</dbReference>
<dbReference type="PROSITE" id="PS50126">
    <property type="entry name" value="S1"/>
    <property type="match status" value="1"/>
</dbReference>
<proteinExistence type="inferred from homology"/>
<name>PNP_NOCSJ</name>
<accession>A1SLJ4</accession>
<feature type="chain" id="PRO_0000329741" description="Polyribonucleotide nucleotidyltransferase">
    <location>
        <begin position="1"/>
        <end position="742"/>
    </location>
</feature>
<feature type="domain" description="KH" evidence="1">
    <location>
        <begin position="581"/>
        <end position="640"/>
    </location>
</feature>
<feature type="domain" description="S1 motif" evidence="1">
    <location>
        <begin position="652"/>
        <end position="724"/>
    </location>
</feature>
<feature type="binding site" evidence="1">
    <location>
        <position position="515"/>
    </location>
    <ligand>
        <name>Mg(2+)</name>
        <dbReference type="ChEBI" id="CHEBI:18420"/>
    </ligand>
</feature>
<feature type="binding site" evidence="1">
    <location>
        <position position="521"/>
    </location>
    <ligand>
        <name>Mg(2+)</name>
        <dbReference type="ChEBI" id="CHEBI:18420"/>
    </ligand>
</feature>
<sequence length="742" mass="79752">MTDPEISAVETVLDNGKFGTRTVKFETGLLARQAAGAVTAYLDEDTMLLSATTAGKHPKDHFDFFPLTIDVEERMYAAGKIPGSFFRSEGRPGEDAILTCRLIDRPLRPTFKKGLRNEVQVVITVMALNPDTPYDVLAINAASLSTQLSGLPFSGPVGGVRVALIEGQWVAFPTHSQLENAVFDMVVAGRVTETGDVAIMMVEAEATEQTWDLVRSGTQAPTEEIVAGGLDAAKPFIKQLCEAQVELANVAAKPVQDFPVFLDYEDDVYDAVEAAVKAELAAAMKIADKQERNDRTDELKDEVLAKLGEQFEGREKEIGAAFRSVNKQVVRESILRDKVRIDGRGLADIRPLHAEVGVIPRVHGSALFERGETQILGVTTLDMLKMEQQLDTLSPEKHRRYMHKYVFPPFSTGETGRVGSPKRREVGHGALARRALLPVLPTREEFPYAIRQLSEAMGSNGSTSMGSVCASTLALLQAGVPLKAPVAGIAMGLVSGEIDGQLQYVALTDILGAEDAFGDMDFKVAGTREFVTALQLDTKLDGIPAEVLAQALTQARDARLTILDVMAEAIDEPEEMSAYAPRIITITIPVDKIGEVIGPKGKIINQIQDDTGASISIEDDGTIYIGATNGEAAEAAKNAVNAIANPTMPEVGERYLGTVVKTTNFGAFVSLMPGKDGLLHISKLRSLAGGKRVDAVEDVVSVGQKIQVQIAEIDDRGKLSLVPVVEGDQADSDTAEAGSEEE</sequence>
<evidence type="ECO:0000255" key="1">
    <source>
        <dbReference type="HAMAP-Rule" id="MF_01595"/>
    </source>
</evidence>